<dbReference type="EMBL" id="AB209077">
    <property type="protein sequence ID" value="BAD92314.1"/>
    <property type="status" value="ALT_INIT"/>
    <property type="molecule type" value="mRNA"/>
</dbReference>
<dbReference type="SMR" id="Q59GN2"/>
<dbReference type="FunCoup" id="Q59GN2">
    <property type="interactions" value="328"/>
</dbReference>
<dbReference type="IntAct" id="Q59GN2">
    <property type="interactions" value="41"/>
</dbReference>
<dbReference type="MINT" id="Q59GN2"/>
<dbReference type="GlyGen" id="Q59GN2">
    <property type="glycosylation" value="1 site, 1 O-linked glycan (1 site)"/>
</dbReference>
<dbReference type="iPTMnet" id="Q59GN2"/>
<dbReference type="PhosphoSitePlus" id="Q59GN2"/>
<dbReference type="BioMuta" id="HGNC:26015"/>
<dbReference type="jPOST" id="Q59GN2"/>
<dbReference type="MassIVE" id="Q59GN2"/>
<dbReference type="PeptideAtlas" id="Q59GN2"/>
<dbReference type="ProteomicsDB" id="62661"/>
<dbReference type="Pumba" id="Q59GN2"/>
<dbReference type="TopDownProteomics" id="Q59GN2"/>
<dbReference type="AGR" id="HGNC:26015"/>
<dbReference type="GeneCards" id="RPL39P5"/>
<dbReference type="HGNC" id="HGNC:26015">
    <property type="gene designation" value="RPL39P5"/>
</dbReference>
<dbReference type="neXtProt" id="NX_Q59GN2"/>
<dbReference type="InParanoid" id="Q59GN2"/>
<dbReference type="PAN-GO" id="Q59GN2">
    <property type="GO annotations" value="1 GO annotation based on evolutionary models"/>
</dbReference>
<dbReference type="PhylomeDB" id="Q59GN2"/>
<dbReference type="PathwayCommons" id="Q59GN2"/>
<dbReference type="SignaLink" id="Q59GN2"/>
<dbReference type="Pharos" id="Q59GN2">
    <property type="development level" value="Tdark"/>
</dbReference>
<dbReference type="Proteomes" id="UP000005640">
    <property type="component" value="Unplaced"/>
</dbReference>
<dbReference type="RNAct" id="Q59GN2">
    <property type="molecule type" value="protein"/>
</dbReference>
<dbReference type="GO" id="GO:0022625">
    <property type="term" value="C:cytosolic large ribosomal subunit"/>
    <property type="evidence" value="ECO:0000318"/>
    <property type="project" value="GO_Central"/>
</dbReference>
<dbReference type="GO" id="GO:0003735">
    <property type="term" value="F:structural constituent of ribosome"/>
    <property type="evidence" value="ECO:0007669"/>
    <property type="project" value="InterPro"/>
</dbReference>
<dbReference type="GO" id="GO:0006412">
    <property type="term" value="P:translation"/>
    <property type="evidence" value="ECO:0007669"/>
    <property type="project" value="InterPro"/>
</dbReference>
<dbReference type="FunFam" id="1.10.1620.10:FF:000001">
    <property type="entry name" value="60S ribosomal protein-like L39"/>
    <property type="match status" value="1"/>
</dbReference>
<dbReference type="Gene3D" id="1.10.1620.10">
    <property type="entry name" value="Ribosomal protein L39e"/>
    <property type="match status" value="1"/>
</dbReference>
<dbReference type="HAMAP" id="MF_00629">
    <property type="entry name" value="Ribosomal_eL39"/>
    <property type="match status" value="1"/>
</dbReference>
<dbReference type="InterPro" id="IPR000077">
    <property type="entry name" value="Ribosomal_eL39"/>
</dbReference>
<dbReference type="InterPro" id="IPR023626">
    <property type="entry name" value="Ribosomal_eL39_dom_sf"/>
</dbReference>
<dbReference type="PANTHER" id="PTHR19970:SF36">
    <property type="entry name" value="RIBOSOMAL PROTEIN EL39-LIKE 5-RELATED"/>
    <property type="match status" value="1"/>
</dbReference>
<dbReference type="PANTHER" id="PTHR19970">
    <property type="entry name" value="RIBOSOMAL PROTEIN L39E"/>
    <property type="match status" value="1"/>
</dbReference>
<dbReference type="Pfam" id="PF00832">
    <property type="entry name" value="Ribosomal_L39"/>
    <property type="match status" value="1"/>
</dbReference>
<dbReference type="SUPFAM" id="SSF48662">
    <property type="entry name" value="Ribosomal protein L39e"/>
    <property type="match status" value="1"/>
</dbReference>
<name>R39L5_HUMAN</name>
<comment type="similarity">
    <text evidence="1">Belongs to the eukaryotic ribosomal protein eL39 family.</text>
</comment>
<comment type="caution">
    <text evidence="1">Could be the product of a pseudogene.</text>
</comment>
<comment type="sequence caution" evidence="1">
    <conflict type="erroneous initiation">
        <sequence resource="EMBL-CDS" id="BAD92314"/>
    </conflict>
</comment>
<proteinExistence type="uncertain"/>
<organism>
    <name type="scientific">Homo sapiens</name>
    <name type="common">Human</name>
    <dbReference type="NCBI Taxonomy" id="9606"/>
    <lineage>
        <taxon>Eukaryota</taxon>
        <taxon>Metazoa</taxon>
        <taxon>Chordata</taxon>
        <taxon>Craniata</taxon>
        <taxon>Vertebrata</taxon>
        <taxon>Euteleostomi</taxon>
        <taxon>Mammalia</taxon>
        <taxon>Eutheria</taxon>
        <taxon>Euarchontoglires</taxon>
        <taxon>Primates</taxon>
        <taxon>Haplorrhini</taxon>
        <taxon>Catarrhini</taxon>
        <taxon>Hominidae</taxon>
        <taxon>Homo</taxon>
    </lineage>
</organism>
<sequence>MSSHKTFKIKQFLAKKQKQNRPIPQWIRMKTGNKIRYNSKRRHWKRTKLGL</sequence>
<gene>
    <name type="primary">RPL39P5</name>
</gene>
<feature type="chain" id="PRO_0000346129" description="Putative ribosomal protein eL39-like 5">
    <location>
        <begin position="1"/>
        <end position="51"/>
    </location>
</feature>
<protein>
    <recommendedName>
        <fullName evidence="1">Putative ribosomal protein eL39-like 5</fullName>
    </recommendedName>
    <alternativeName>
        <fullName>60S ribosomal protein L39 pseudogene 5</fullName>
    </alternativeName>
    <alternativeName>
        <fullName>Putative 60S ribosomal protein L39-like 5</fullName>
    </alternativeName>
</protein>
<keyword id="KW-1185">Reference proteome</keyword>
<keyword id="KW-0687">Ribonucleoprotein</keyword>
<keyword id="KW-0689">Ribosomal protein</keyword>
<accession>Q59GN2</accession>
<reference key="1">
    <citation type="submission" date="2005-03" db="EMBL/GenBank/DDBJ databases">
        <authorList>
            <person name="Totoki Y."/>
            <person name="Toyoda A."/>
            <person name="Takeda T."/>
            <person name="Sakaki Y."/>
            <person name="Tanaka A."/>
            <person name="Yokoyama S."/>
            <person name="Ohara O."/>
            <person name="Nagase T."/>
            <person name="Kikuno R.F."/>
        </authorList>
    </citation>
    <scope>NUCLEOTIDE SEQUENCE [LARGE SCALE MRNA]</scope>
    <source>
        <tissue>Brain</tissue>
    </source>
</reference>
<evidence type="ECO:0000305" key="1"/>